<proteinExistence type="inferred from homology"/>
<keyword id="KW-0227">DNA damage</keyword>
<keyword id="KW-0234">DNA repair</keyword>
<keyword id="KW-0238">DNA-binding</keyword>
<keyword id="KW-0496">Mitochondrion</keyword>
<keyword id="KW-1135">Mitochondrion nucleoid</keyword>
<keyword id="KW-1185">Reference proteome</keyword>
<keyword id="KW-0809">Transit peptide</keyword>
<dbReference type="EMBL" id="CP017623">
    <property type="protein sequence ID" value="AOW25947.1"/>
    <property type="molecule type" value="Genomic_DNA"/>
</dbReference>
<dbReference type="RefSeq" id="XP_721455.2">
    <property type="nucleotide sequence ID" value="XM_716362.2"/>
</dbReference>
<dbReference type="FunCoup" id="Q5AI97">
    <property type="interactions" value="301"/>
</dbReference>
<dbReference type="STRING" id="237561.Q5AI97"/>
<dbReference type="EnsemblFungi" id="C1_02660C_A-T">
    <property type="protein sequence ID" value="C1_02660C_A-T-p1"/>
    <property type="gene ID" value="C1_02660C_A"/>
</dbReference>
<dbReference type="GeneID" id="3636820"/>
<dbReference type="KEGG" id="cal:CAALFM_C102660CA"/>
<dbReference type="CGD" id="CAL0000189590">
    <property type="gene designation" value="MGM101"/>
</dbReference>
<dbReference type="VEuPathDB" id="FungiDB:C1_02660C_A"/>
<dbReference type="eggNOG" id="ENOG502RXU4">
    <property type="taxonomic scope" value="Eukaryota"/>
</dbReference>
<dbReference type="HOGENOM" id="CLU_028692_1_0_1"/>
<dbReference type="InParanoid" id="Q5AI97"/>
<dbReference type="OMA" id="KIWTRKD"/>
<dbReference type="OrthoDB" id="17164at2759"/>
<dbReference type="PRO" id="PR:Q5AI97"/>
<dbReference type="Proteomes" id="UP000000559">
    <property type="component" value="Chromosome 1"/>
</dbReference>
<dbReference type="GO" id="GO:0000262">
    <property type="term" value="C:mitochondrial chromosome"/>
    <property type="evidence" value="ECO:0007669"/>
    <property type="project" value="InterPro"/>
</dbReference>
<dbReference type="GO" id="GO:0042645">
    <property type="term" value="C:mitochondrial nucleoid"/>
    <property type="evidence" value="ECO:0000318"/>
    <property type="project" value="GO_Central"/>
</dbReference>
<dbReference type="GO" id="GO:0003677">
    <property type="term" value="F:DNA binding"/>
    <property type="evidence" value="ECO:0000318"/>
    <property type="project" value="GO_Central"/>
</dbReference>
<dbReference type="GO" id="GO:0003697">
    <property type="term" value="F:single-stranded DNA binding"/>
    <property type="evidence" value="ECO:0007669"/>
    <property type="project" value="EnsemblFungi"/>
</dbReference>
<dbReference type="GO" id="GO:0036297">
    <property type="term" value="P:interstrand cross-link repair"/>
    <property type="evidence" value="ECO:0000318"/>
    <property type="project" value="GO_Central"/>
</dbReference>
<dbReference type="GO" id="GO:0000002">
    <property type="term" value="P:mitochondrial genome maintenance"/>
    <property type="evidence" value="ECO:0000318"/>
    <property type="project" value="GO_Central"/>
</dbReference>
<dbReference type="GO" id="GO:0000725">
    <property type="term" value="P:recombinational repair"/>
    <property type="evidence" value="ECO:0000318"/>
    <property type="project" value="GO_Central"/>
</dbReference>
<dbReference type="InterPro" id="IPR009446">
    <property type="entry name" value="Mgm101"/>
</dbReference>
<dbReference type="PANTHER" id="PTHR31404">
    <property type="entry name" value="MITOCHONDRIAL GENOME MAINTENANCE PROTEIN MGM101"/>
    <property type="match status" value="1"/>
</dbReference>
<dbReference type="PANTHER" id="PTHR31404:SF0">
    <property type="entry name" value="MITOCHONDRIAL GENOME MAINTENANCE PROTEIN MGM101"/>
    <property type="match status" value="1"/>
</dbReference>
<dbReference type="Pfam" id="PF06420">
    <property type="entry name" value="Mgm101p"/>
    <property type="match status" value="1"/>
</dbReference>
<protein>
    <recommendedName>
        <fullName>Mitochondrial genome maintenance protein MGM101</fullName>
    </recommendedName>
</protein>
<reference key="1">
    <citation type="journal article" date="2004" name="Proc. Natl. Acad. Sci. U.S.A.">
        <title>The diploid genome sequence of Candida albicans.</title>
        <authorList>
            <person name="Jones T."/>
            <person name="Federspiel N.A."/>
            <person name="Chibana H."/>
            <person name="Dungan J."/>
            <person name="Kalman S."/>
            <person name="Magee B.B."/>
            <person name="Newport G."/>
            <person name="Thorstenson Y.R."/>
            <person name="Agabian N."/>
            <person name="Magee P.T."/>
            <person name="Davis R.W."/>
            <person name="Scherer S."/>
        </authorList>
    </citation>
    <scope>NUCLEOTIDE SEQUENCE [LARGE SCALE GENOMIC DNA]</scope>
    <source>
        <strain>SC5314 / ATCC MYA-2876</strain>
    </source>
</reference>
<reference key="2">
    <citation type="journal article" date="2007" name="Genome Biol.">
        <title>Assembly of the Candida albicans genome into sixteen supercontigs aligned on the eight chromosomes.</title>
        <authorList>
            <person name="van het Hoog M."/>
            <person name="Rast T.J."/>
            <person name="Martchenko M."/>
            <person name="Grindle S."/>
            <person name="Dignard D."/>
            <person name="Hogues H."/>
            <person name="Cuomo C."/>
            <person name="Berriman M."/>
            <person name="Scherer S."/>
            <person name="Magee B.B."/>
            <person name="Whiteway M."/>
            <person name="Chibana H."/>
            <person name="Nantel A."/>
            <person name="Magee P.T."/>
        </authorList>
    </citation>
    <scope>GENOME REANNOTATION</scope>
    <source>
        <strain>SC5314 / ATCC MYA-2876</strain>
    </source>
</reference>
<reference key="3">
    <citation type="journal article" date="2013" name="Genome Biol.">
        <title>Assembly of a phased diploid Candida albicans genome facilitates allele-specific measurements and provides a simple model for repeat and indel structure.</title>
        <authorList>
            <person name="Muzzey D."/>
            <person name="Schwartz K."/>
            <person name="Weissman J.S."/>
            <person name="Sherlock G."/>
        </authorList>
    </citation>
    <scope>NUCLEOTIDE SEQUENCE [LARGE SCALE GENOMIC DNA]</scope>
    <scope>GENOME REANNOTATION</scope>
    <source>
        <strain>SC5314 / ATCC MYA-2876</strain>
    </source>
</reference>
<accession>Q5AI97</accession>
<accession>A0A1D8PCS5</accession>
<name>MG101_CANAL</name>
<gene>
    <name type="primary">MGM101</name>
    <name type="ordered locus">CAALFM_C102660CA</name>
    <name type="ORF">CaO19.10473</name>
    <name type="ORF">CaO19.2956</name>
</gene>
<feature type="transit peptide" description="Mitochondrion" evidence="2">
    <location>
        <begin position="1"/>
        <end position="18"/>
    </location>
</feature>
<feature type="chain" id="PRO_0000045815" description="Mitochondrial genome maintenance protein MGM101">
    <location>
        <begin position="19"/>
        <end position="275"/>
    </location>
</feature>
<feature type="region of interest" description="Disordered" evidence="3">
    <location>
        <begin position="34"/>
        <end position="77"/>
    </location>
</feature>
<feature type="compositionally biased region" description="Low complexity" evidence="3">
    <location>
        <begin position="38"/>
        <end position="64"/>
    </location>
</feature>
<comment type="function">
    <text evidence="1">Performs an essential function in the repair of oxidatively damaged mtDNA that is required for the maintenance of the mitochondrial genome. Binds to DNA (By similarity).</text>
</comment>
<comment type="subcellular location">
    <subcellularLocation>
        <location evidence="1">Mitochondrion matrix</location>
        <location evidence="1">Mitochondrion nucleoid</location>
    </subcellularLocation>
</comment>
<comment type="similarity">
    <text evidence="4">Belongs to the MGM101 family.</text>
</comment>
<sequence>MFNLIRLGFPRTSIIRYYSSTAVNQAKVYSRTYKRAGPVTKSSTSTSRSTSTDASPASSSPPKESVSDIEPSSEVPVKSTTSYILHDAPLEASNKNNGETINWSDSFHGLGAQPFSKEIAEILLAPVAEEDIEIKPDGLLYLPEIKYRRVLNRAFGPGGWGLAPRTESLVTSGQISREYGLICHGRLVSIARGEQDYFGGEEKLTTALEGCKSNALMRCCKDLGIASELWDPSFIRRWKKKYCEEIFVEHVNTKKKKKIWKLKSIKTIDYPYKMT</sequence>
<evidence type="ECO:0000250" key="1"/>
<evidence type="ECO:0000255" key="2"/>
<evidence type="ECO:0000256" key="3">
    <source>
        <dbReference type="SAM" id="MobiDB-lite"/>
    </source>
</evidence>
<evidence type="ECO:0000305" key="4"/>
<organism>
    <name type="scientific">Candida albicans (strain SC5314 / ATCC MYA-2876)</name>
    <name type="common">Yeast</name>
    <dbReference type="NCBI Taxonomy" id="237561"/>
    <lineage>
        <taxon>Eukaryota</taxon>
        <taxon>Fungi</taxon>
        <taxon>Dikarya</taxon>
        <taxon>Ascomycota</taxon>
        <taxon>Saccharomycotina</taxon>
        <taxon>Pichiomycetes</taxon>
        <taxon>Debaryomycetaceae</taxon>
        <taxon>Candida/Lodderomyces clade</taxon>
        <taxon>Candida</taxon>
    </lineage>
</organism>